<sequence>MGCCQDKDFEMSDEQSKEEESEDGREDETTDTQRGPRECERGLPEGRGELRGLVVPSGAEDIDLNSPDHPNHKSNESLLITVLWRRLSTFGRRGSSRPSKRQPDQIRKQESPIREGNQEEPEKG</sequence>
<comment type="tissue specificity">
    <text evidence="2">Expressed in Testis.</text>
</comment>
<protein>
    <recommendedName>
        <fullName evidence="2">Testis-expressed protein 54</fullName>
    </recommendedName>
</protein>
<name>TEX54_HUMAN</name>
<gene>
    <name evidence="3" type="primary">TEX54</name>
</gene>
<proteinExistence type="evidence at protein level"/>
<reference key="1">
    <citation type="submission" date="2012-05" db="EMBL/GenBank/DDBJ databases">
        <title>RIKEN full-length enriched human cDNA library.</title>
        <authorList>
            <person name="Arakawa T."/>
            <person name="Carninci P."/>
            <person name="Fukuda S."/>
            <person name="Hasegawa A."/>
            <person name="Hayashida K."/>
            <person name="Hori F."/>
            <person name="Kai C."/>
            <person name="Kawai J."/>
            <person name="Kojima M."/>
            <person name="Murata M."/>
            <person name="Nakamura M."/>
            <person name="Nishiyori H."/>
            <person name="Nomura K."/>
            <person name="Ohno M."/>
            <person name="Sasaki D."/>
            <person name="Shibazaki E."/>
            <person name="Tagami M."/>
            <person name="Tagami Y."/>
            <person name="Hayashizaki Y."/>
        </authorList>
    </citation>
    <scope>NUCLEOTIDE SEQUENCE [LARGE SCALE MRNA]</scope>
    <source>
        <tissue>Testis</tissue>
        <tissue>Thymus</tissue>
    </source>
</reference>
<reference key="2">
    <citation type="journal article" date="2006" name="Nature">
        <title>Human chromosome 11 DNA sequence and analysis including novel gene identification.</title>
        <authorList>
            <person name="Taylor T.D."/>
            <person name="Noguchi H."/>
            <person name="Totoki Y."/>
            <person name="Toyoda A."/>
            <person name="Kuroki Y."/>
            <person name="Dewar K."/>
            <person name="Lloyd C."/>
            <person name="Itoh T."/>
            <person name="Takeda T."/>
            <person name="Kim D.-W."/>
            <person name="She X."/>
            <person name="Barlow K.F."/>
            <person name="Bloom T."/>
            <person name="Bruford E."/>
            <person name="Chang J.L."/>
            <person name="Cuomo C.A."/>
            <person name="Eichler E."/>
            <person name="FitzGerald M.G."/>
            <person name="Jaffe D.B."/>
            <person name="LaButti K."/>
            <person name="Nicol R."/>
            <person name="Park H.-S."/>
            <person name="Seaman C."/>
            <person name="Sougnez C."/>
            <person name="Yang X."/>
            <person name="Zimmer A.R."/>
            <person name="Zody M.C."/>
            <person name="Birren B.W."/>
            <person name="Nusbaum C."/>
            <person name="Fujiyama A."/>
            <person name="Hattori M."/>
            <person name="Rogers J."/>
            <person name="Lander E.S."/>
            <person name="Sakaki Y."/>
        </authorList>
    </citation>
    <scope>NUCLEOTIDE SEQUENCE [LARGE SCALE GENOMIC DNA]</scope>
</reference>
<evidence type="ECO:0000256" key="1">
    <source>
        <dbReference type="SAM" id="MobiDB-lite"/>
    </source>
</evidence>
<evidence type="ECO:0000305" key="2"/>
<evidence type="ECO:0000312" key="3">
    <source>
        <dbReference type="HGNC" id="HGNC:53729"/>
    </source>
</evidence>
<keyword id="KW-1267">Proteomics identification</keyword>
<keyword id="KW-1185">Reference proteome</keyword>
<accession>A0A1B0GVG6</accession>
<dbReference type="EMBL" id="DB453747">
    <property type="status" value="NOT_ANNOTATED_CDS"/>
    <property type="molecule type" value="mRNA"/>
</dbReference>
<dbReference type="EMBL" id="HY090721">
    <property type="status" value="NOT_ANNOTATED_CDS"/>
    <property type="molecule type" value="mRNA"/>
</dbReference>
<dbReference type="EMBL" id="AP001160">
    <property type="status" value="NOT_ANNOTATED_CDS"/>
    <property type="molecule type" value="Genomic_DNA"/>
</dbReference>
<dbReference type="CCDS" id="CCDS91495.1"/>
<dbReference type="RefSeq" id="NP_001382388.1">
    <property type="nucleotide sequence ID" value="NM_001395459.1"/>
</dbReference>
<dbReference type="BioMuta" id="ENSG00000283268"/>
<dbReference type="MassIVE" id="A0A1B0GVG6"/>
<dbReference type="PeptideAtlas" id="A0A1B0GVG6"/>
<dbReference type="Ensembl" id="ENST00000636508.2">
    <property type="protein sequence ID" value="ENSP00000490507.1"/>
    <property type="gene ID" value="ENSG00000283268.2"/>
</dbReference>
<dbReference type="GeneID" id="111216277"/>
<dbReference type="MANE-Select" id="ENST00000636508.2">
    <property type="protein sequence ID" value="ENSP00000490507.1"/>
    <property type="RefSeq nucleotide sequence ID" value="NM_001395459.1"/>
    <property type="RefSeq protein sequence ID" value="NP_001382388.1"/>
</dbReference>
<dbReference type="AGR" id="HGNC:53729"/>
<dbReference type="GeneCards" id="TEX54"/>
<dbReference type="HGNC" id="HGNC:53729">
    <property type="gene designation" value="TEX54"/>
</dbReference>
<dbReference type="HPA" id="ENSG00000283268">
    <property type="expression patterns" value="Tissue enriched (testis)"/>
</dbReference>
<dbReference type="neXtProt" id="NX_A0A1B0GVG6"/>
<dbReference type="VEuPathDB" id="HostDB:ENSG00000283268"/>
<dbReference type="GeneTree" id="ENSGT00700000106100"/>
<dbReference type="InParanoid" id="A0A1B0GVG6"/>
<dbReference type="OMA" id="PRECERG"/>
<dbReference type="OrthoDB" id="9630289at2759"/>
<dbReference type="PAN-GO" id="A0A1B0GVG6">
    <property type="GO annotations" value="0 GO annotations based on evolutionary models"/>
</dbReference>
<dbReference type="Pharos" id="A0A1B0GVG6">
    <property type="development level" value="Tdark"/>
</dbReference>
<dbReference type="PRO" id="PR:A0A1B0GVG6"/>
<dbReference type="Proteomes" id="UP000005640">
    <property type="component" value="Chromosome 11"/>
</dbReference>
<dbReference type="RNAct" id="A0A1B0GVG6">
    <property type="molecule type" value="protein"/>
</dbReference>
<dbReference type="Bgee" id="ENSG00000283268">
    <property type="expression patterns" value="Expressed in male germ line stem cell (sensu Vertebrata) in testis and 87 other cell types or tissues"/>
</dbReference>
<organism>
    <name type="scientific">Homo sapiens</name>
    <name type="common">Human</name>
    <dbReference type="NCBI Taxonomy" id="9606"/>
    <lineage>
        <taxon>Eukaryota</taxon>
        <taxon>Metazoa</taxon>
        <taxon>Chordata</taxon>
        <taxon>Craniata</taxon>
        <taxon>Vertebrata</taxon>
        <taxon>Euteleostomi</taxon>
        <taxon>Mammalia</taxon>
        <taxon>Eutheria</taxon>
        <taxon>Euarchontoglires</taxon>
        <taxon>Primates</taxon>
        <taxon>Haplorrhini</taxon>
        <taxon>Catarrhini</taxon>
        <taxon>Hominidae</taxon>
        <taxon>Homo</taxon>
    </lineage>
</organism>
<feature type="chain" id="PRO_0000443093" description="Testis-expressed protein 54">
    <location>
        <begin position="1"/>
        <end position="124"/>
    </location>
</feature>
<feature type="region of interest" description="Disordered" evidence="1">
    <location>
        <begin position="1"/>
        <end position="77"/>
    </location>
</feature>
<feature type="region of interest" description="Disordered" evidence="1">
    <location>
        <begin position="90"/>
        <end position="124"/>
    </location>
</feature>
<feature type="compositionally biased region" description="Basic and acidic residues" evidence="1">
    <location>
        <begin position="1"/>
        <end position="10"/>
    </location>
</feature>
<feature type="compositionally biased region" description="Acidic residues" evidence="1">
    <location>
        <begin position="11"/>
        <end position="30"/>
    </location>
</feature>
<feature type="compositionally biased region" description="Basic and acidic residues" evidence="1">
    <location>
        <begin position="34"/>
        <end position="50"/>
    </location>
</feature>
<feature type="compositionally biased region" description="Basic and acidic residues" evidence="1">
    <location>
        <begin position="101"/>
        <end position="124"/>
    </location>
</feature>